<accession>A2SHT9</accession>
<name>MDH_METPP</name>
<evidence type="ECO:0000250" key="1"/>
<evidence type="ECO:0000255" key="2">
    <source>
        <dbReference type="HAMAP-Rule" id="MF_01517"/>
    </source>
</evidence>
<keyword id="KW-0520">NAD</keyword>
<keyword id="KW-0560">Oxidoreductase</keyword>
<keyword id="KW-1185">Reference proteome</keyword>
<keyword id="KW-0816">Tricarboxylic acid cycle</keyword>
<feature type="initiator methionine" description="Removed" evidence="1">
    <location>
        <position position="1"/>
    </location>
</feature>
<feature type="chain" id="PRO_0000294391" description="Malate dehydrogenase">
    <location>
        <begin position="2"/>
        <end position="328"/>
    </location>
</feature>
<feature type="active site" description="Proton acceptor" evidence="2">
    <location>
        <position position="190"/>
    </location>
</feature>
<feature type="binding site" evidence="2">
    <location>
        <begin position="12"/>
        <end position="18"/>
    </location>
    <ligand>
        <name>NAD(+)</name>
        <dbReference type="ChEBI" id="CHEBI:57540"/>
    </ligand>
</feature>
<feature type="binding site" evidence="2">
    <location>
        <position position="95"/>
    </location>
    <ligand>
        <name>substrate</name>
    </ligand>
</feature>
<feature type="binding site" evidence="2">
    <location>
        <position position="101"/>
    </location>
    <ligand>
        <name>substrate</name>
    </ligand>
</feature>
<feature type="binding site" evidence="2">
    <location>
        <position position="108"/>
    </location>
    <ligand>
        <name>NAD(+)</name>
        <dbReference type="ChEBI" id="CHEBI:57540"/>
    </ligand>
</feature>
<feature type="binding site" evidence="2">
    <location>
        <position position="115"/>
    </location>
    <ligand>
        <name>NAD(+)</name>
        <dbReference type="ChEBI" id="CHEBI:57540"/>
    </ligand>
</feature>
<feature type="binding site" evidence="2">
    <location>
        <begin position="132"/>
        <end position="134"/>
    </location>
    <ligand>
        <name>NAD(+)</name>
        <dbReference type="ChEBI" id="CHEBI:57540"/>
    </ligand>
</feature>
<feature type="binding site" evidence="2">
    <location>
        <position position="134"/>
    </location>
    <ligand>
        <name>substrate</name>
    </ligand>
</feature>
<feature type="binding site" evidence="2">
    <location>
        <position position="165"/>
    </location>
    <ligand>
        <name>substrate</name>
    </ligand>
</feature>
<protein>
    <recommendedName>
        <fullName evidence="2">Malate dehydrogenase</fullName>
        <ecNumber evidence="2">1.1.1.37</ecNumber>
    </recommendedName>
</protein>
<proteinExistence type="inferred from homology"/>
<comment type="function">
    <text evidence="2">Catalyzes the reversible oxidation of malate to oxaloacetate.</text>
</comment>
<comment type="catalytic activity">
    <reaction evidence="2">
        <text>(S)-malate + NAD(+) = oxaloacetate + NADH + H(+)</text>
        <dbReference type="Rhea" id="RHEA:21432"/>
        <dbReference type="ChEBI" id="CHEBI:15378"/>
        <dbReference type="ChEBI" id="CHEBI:15589"/>
        <dbReference type="ChEBI" id="CHEBI:16452"/>
        <dbReference type="ChEBI" id="CHEBI:57540"/>
        <dbReference type="ChEBI" id="CHEBI:57945"/>
        <dbReference type="EC" id="1.1.1.37"/>
    </reaction>
</comment>
<comment type="similarity">
    <text evidence="2">Belongs to the LDH/MDH superfamily. MDH type 2 family.</text>
</comment>
<gene>
    <name evidence="2" type="primary">mdh</name>
    <name type="ordered locus">Mpe_A2172</name>
</gene>
<reference key="1">
    <citation type="journal article" date="2007" name="J. Bacteriol.">
        <title>Whole-genome analysis of the methyl tert-butyl ether-degrading beta-proteobacterium Methylibium petroleiphilum PM1.</title>
        <authorList>
            <person name="Kane S.R."/>
            <person name="Chakicherla A.Y."/>
            <person name="Chain P.S.G."/>
            <person name="Schmidt R."/>
            <person name="Shin M.W."/>
            <person name="Legler T.C."/>
            <person name="Scow K.M."/>
            <person name="Larimer F.W."/>
            <person name="Lucas S.M."/>
            <person name="Richardson P.M."/>
            <person name="Hristova K.R."/>
        </authorList>
    </citation>
    <scope>NUCLEOTIDE SEQUENCE [LARGE SCALE GENOMIC DNA]</scope>
    <source>
        <strain>ATCC BAA-1232 / LMG 22953 / PM1</strain>
    </source>
</reference>
<organism>
    <name type="scientific">Methylibium petroleiphilum (strain ATCC BAA-1232 / LMG 22953 / PM1)</name>
    <dbReference type="NCBI Taxonomy" id="420662"/>
    <lineage>
        <taxon>Bacteria</taxon>
        <taxon>Pseudomonadati</taxon>
        <taxon>Pseudomonadota</taxon>
        <taxon>Betaproteobacteria</taxon>
        <taxon>Burkholderiales</taxon>
        <taxon>Sphaerotilaceae</taxon>
        <taxon>Methylibium</taxon>
    </lineage>
</organism>
<dbReference type="EC" id="1.1.1.37" evidence="2"/>
<dbReference type="EMBL" id="CP000555">
    <property type="protein sequence ID" value="ABM95128.1"/>
    <property type="molecule type" value="Genomic_DNA"/>
</dbReference>
<dbReference type="RefSeq" id="WP_011829765.1">
    <property type="nucleotide sequence ID" value="NC_008825.1"/>
</dbReference>
<dbReference type="SMR" id="A2SHT9"/>
<dbReference type="STRING" id="420662.Mpe_A2172"/>
<dbReference type="KEGG" id="mpt:Mpe_A2172"/>
<dbReference type="eggNOG" id="COG0039">
    <property type="taxonomic scope" value="Bacteria"/>
</dbReference>
<dbReference type="HOGENOM" id="CLU_040727_2_0_4"/>
<dbReference type="Proteomes" id="UP000000366">
    <property type="component" value="Chromosome"/>
</dbReference>
<dbReference type="GO" id="GO:0030060">
    <property type="term" value="F:L-malate dehydrogenase (NAD+) activity"/>
    <property type="evidence" value="ECO:0007669"/>
    <property type="project" value="UniProtKB-UniRule"/>
</dbReference>
<dbReference type="GO" id="GO:0006108">
    <property type="term" value="P:malate metabolic process"/>
    <property type="evidence" value="ECO:0007669"/>
    <property type="project" value="InterPro"/>
</dbReference>
<dbReference type="GO" id="GO:0006099">
    <property type="term" value="P:tricarboxylic acid cycle"/>
    <property type="evidence" value="ECO:0007669"/>
    <property type="project" value="UniProtKB-UniRule"/>
</dbReference>
<dbReference type="CDD" id="cd01338">
    <property type="entry name" value="MDH_chloroplast-like"/>
    <property type="match status" value="1"/>
</dbReference>
<dbReference type="FunFam" id="3.40.50.720:FF:000010">
    <property type="entry name" value="Malate dehydrogenase"/>
    <property type="match status" value="1"/>
</dbReference>
<dbReference type="FunFam" id="3.90.110.10:FF:000002">
    <property type="entry name" value="Malate dehydrogenase"/>
    <property type="match status" value="1"/>
</dbReference>
<dbReference type="Gene3D" id="3.90.110.10">
    <property type="entry name" value="Lactate dehydrogenase/glycoside hydrolase, family 4, C-terminal"/>
    <property type="match status" value="1"/>
</dbReference>
<dbReference type="Gene3D" id="3.40.50.720">
    <property type="entry name" value="NAD(P)-binding Rossmann-like Domain"/>
    <property type="match status" value="1"/>
</dbReference>
<dbReference type="HAMAP" id="MF_01517">
    <property type="entry name" value="Malate_dehydrog_2"/>
    <property type="match status" value="1"/>
</dbReference>
<dbReference type="InterPro" id="IPR001557">
    <property type="entry name" value="L-lactate/malate_DH"/>
</dbReference>
<dbReference type="InterPro" id="IPR022383">
    <property type="entry name" value="Lactate/malate_DH_C"/>
</dbReference>
<dbReference type="InterPro" id="IPR001236">
    <property type="entry name" value="Lactate/malate_DH_N"/>
</dbReference>
<dbReference type="InterPro" id="IPR015955">
    <property type="entry name" value="Lactate_DH/Glyco_Ohase_4_C"/>
</dbReference>
<dbReference type="InterPro" id="IPR010945">
    <property type="entry name" value="Malate_DH_type2"/>
</dbReference>
<dbReference type="InterPro" id="IPR036291">
    <property type="entry name" value="NAD(P)-bd_dom_sf"/>
</dbReference>
<dbReference type="NCBIfam" id="TIGR01759">
    <property type="entry name" value="MalateDH-SF1"/>
    <property type="match status" value="1"/>
</dbReference>
<dbReference type="NCBIfam" id="NF003916">
    <property type="entry name" value="PRK05442.1"/>
    <property type="match status" value="1"/>
</dbReference>
<dbReference type="PANTHER" id="PTHR23382">
    <property type="entry name" value="MALATE DEHYDROGENASE"/>
    <property type="match status" value="1"/>
</dbReference>
<dbReference type="Pfam" id="PF02866">
    <property type="entry name" value="Ldh_1_C"/>
    <property type="match status" value="1"/>
</dbReference>
<dbReference type="Pfam" id="PF00056">
    <property type="entry name" value="Ldh_1_N"/>
    <property type="match status" value="1"/>
</dbReference>
<dbReference type="PIRSF" id="PIRSF000102">
    <property type="entry name" value="Lac_mal_DH"/>
    <property type="match status" value="1"/>
</dbReference>
<dbReference type="SUPFAM" id="SSF56327">
    <property type="entry name" value="LDH C-terminal domain-like"/>
    <property type="match status" value="1"/>
</dbReference>
<dbReference type="SUPFAM" id="SSF51735">
    <property type="entry name" value="NAD(P)-binding Rossmann-fold domains"/>
    <property type="match status" value="1"/>
</dbReference>
<sequence length="328" mass="34943">MSKKPVRVAVTGAAGQIGYALLFRIASGEMLGKDQPVILQLLEIPDEKAQKALKGVMMELEDCAFPLLAGMEAHGDPMTAFKDADYALLVGSRPRGPGMERAELLSINGAIFTAQGKALNAVASRNVKVLVVGNPANTNAYIAMKAAPDLPRKNFTAMLRLDHNRAASQIAAKTGKPVSSIKQLAVWGNHSPTMYADYRFATIDGASVKDMINDQVWNKDVFLPTVGKRGAAIIEARGLSSAASAANAAIDHMRDWALGTNGAWVTMGVPSNGEYGIPKDVMFGFPVTCANGEYKIVDGLAIDAFSQECINKTLAELQGEQDGVKHLI</sequence>